<sequence length="69" mass="8345">MLLYIVIIVACIISKLVPNEYWAIHLFFIIMIFMVYMYEKLDIHQKYQFWNYTMSGLSGHNVQVICKCY</sequence>
<evidence type="ECO:0000255" key="1"/>
<evidence type="ECO:0000269" key="2">
    <source>
    </source>
</evidence>
<evidence type="ECO:0000305" key="3"/>
<dbReference type="EMBL" id="U18466">
    <property type="protein sequence ID" value="AAA65249.1"/>
    <property type="molecule type" value="Genomic_DNA"/>
</dbReference>
<dbReference type="EMBL" id="U81365">
    <property type="protein sequence ID" value="AAC40562.1"/>
    <property type="molecule type" value="Genomic_DNA"/>
</dbReference>
<dbReference type="RefSeq" id="NP_042713.1">
    <property type="nucleotide sequence ID" value="NC_001659.2"/>
</dbReference>
<dbReference type="SMR" id="Q65134"/>
<dbReference type="GeneID" id="22220403"/>
<dbReference type="KEGG" id="vg:22220403"/>
<dbReference type="Proteomes" id="UP000000624">
    <property type="component" value="Segment"/>
</dbReference>
<dbReference type="GO" id="GO:0033644">
    <property type="term" value="C:host cell membrane"/>
    <property type="evidence" value="ECO:0007669"/>
    <property type="project" value="UniProtKB-SubCell"/>
</dbReference>
<dbReference type="GO" id="GO:0016020">
    <property type="term" value="C:membrane"/>
    <property type="evidence" value="ECO:0007669"/>
    <property type="project" value="UniProtKB-KW"/>
</dbReference>
<organismHost>
    <name type="scientific">Ornithodoros</name>
    <name type="common">relapsing fever ticks</name>
    <dbReference type="NCBI Taxonomy" id="6937"/>
</organismHost>
<organismHost>
    <name type="scientific">Sus scrofa</name>
    <name type="common">Pig</name>
    <dbReference type="NCBI Taxonomy" id="9823"/>
</organismHost>
<gene>
    <name type="ordered locus">BA71V-018</name>
    <name type="ORF">X69R</name>
</gene>
<accession>Q65134</accession>
<reference key="1">
    <citation type="journal article" date="1990" name="J. Virol.">
        <title>Multigene families in African swine fever virus: family 360.</title>
        <authorList>
            <person name="Gonzalez A."/>
            <person name="Calvo V."/>
            <person name="Almazan F."/>
            <person name="Almendral J.M."/>
            <person name="Ramirez J.C."/>
            <person name="de la Vega I."/>
            <person name="Blasco R."/>
            <person name="Vinuela E."/>
        </authorList>
    </citation>
    <scope>NUCLEOTIDE SEQUENCE [GENOMIC DNA]</scope>
</reference>
<reference key="2">
    <citation type="journal article" date="1995" name="Virology">
        <title>Analysis of the complete nucleotide sequence of African swine fever virus.</title>
        <authorList>
            <person name="Yanez R.J."/>
            <person name="Rodriguez J.M."/>
            <person name="Nogal M.L."/>
            <person name="Yuste L."/>
            <person name="Enriquez C."/>
            <person name="Rodriguez J.F."/>
            <person name="Vinuela E."/>
        </authorList>
    </citation>
    <scope>NUCLEOTIDE SEQUENCE [LARGE SCALE GENOMIC DNA]</scope>
</reference>
<reference key="3">
    <citation type="journal article" date="2020" name="Viruses">
        <title>X69R Is a Non-Essential Gene That, When Deleted from African Swine Fever, Does Not Affect Virulence in Swine.</title>
        <authorList>
            <person name="Ramirez-Medina E."/>
            <person name="Vuono E."/>
            <person name="Pruitt S."/>
            <person name="Rai A."/>
            <person name="Silva E."/>
            <person name="Zhu J."/>
            <person name="Velazquez-Salinas L."/>
            <person name="Gladue D.P."/>
            <person name="Borca M.V."/>
        </authorList>
    </citation>
    <scope>DISRUPTION PHENOTYPE</scope>
    <source>
        <strain>Georgia 2007/1</strain>
    </source>
</reference>
<organism>
    <name type="scientific">African swine fever virus (strain Badajoz 1971 Vero-adapted)</name>
    <name type="common">Ba71V</name>
    <name type="synonym">ASFV</name>
    <dbReference type="NCBI Taxonomy" id="10498"/>
    <lineage>
        <taxon>Viruses</taxon>
        <taxon>Varidnaviria</taxon>
        <taxon>Bamfordvirae</taxon>
        <taxon>Nucleocytoviricota</taxon>
        <taxon>Pokkesviricetes</taxon>
        <taxon>Asfuvirales</taxon>
        <taxon>Asfarviridae</taxon>
        <taxon>Asfivirus</taxon>
        <taxon>African swine fever virus</taxon>
    </lineage>
</organism>
<name>VF69R_ASFB7</name>
<keyword id="KW-0325">Glycoprotein</keyword>
<keyword id="KW-1043">Host membrane</keyword>
<keyword id="KW-0472">Membrane</keyword>
<keyword id="KW-1185">Reference proteome</keyword>
<keyword id="KW-0812">Transmembrane</keyword>
<keyword id="KW-1133">Transmembrane helix</keyword>
<comment type="subcellular location">
    <subcellularLocation>
        <location evidence="3">Host membrane</location>
        <topology evidence="3">Single-pass membrane protein</topology>
    </subcellularLocation>
</comment>
<comment type="disruption phenotype">
    <text evidence="2">No effect on virus viability or replication in vitro.</text>
</comment>
<comment type="similarity">
    <text evidence="3">Belongs to the asfivirus X69R family.</text>
</comment>
<protein>
    <recommendedName>
        <fullName>Uncharacterized membrane protein X69R</fullName>
    </recommendedName>
</protein>
<feature type="chain" id="PRO_0000373715" description="Uncharacterized membrane protein X69R">
    <location>
        <begin position="1"/>
        <end position="69"/>
    </location>
</feature>
<feature type="topological domain" description="Cytoplasmic" evidence="1">
    <location>
        <begin position="1"/>
        <end position="15"/>
    </location>
</feature>
<feature type="transmembrane region" description="Helical" evidence="1">
    <location>
        <begin position="16"/>
        <end position="36"/>
    </location>
</feature>
<feature type="topological domain" description="Extracellular" evidence="1">
    <location>
        <begin position="37"/>
        <end position="69"/>
    </location>
</feature>
<feature type="glycosylation site" description="N-linked (GlcNAc...) asparagine; by host" evidence="1">
    <location>
        <position position="51"/>
    </location>
</feature>
<proteinExistence type="inferred from homology"/>